<proteinExistence type="inferred from homology"/>
<feature type="chain" id="PRO_1000076668" description="Uracil-DNA glycosylase">
    <location>
        <begin position="1"/>
        <end position="225"/>
    </location>
</feature>
<feature type="active site" description="Proton acceptor" evidence="1">
    <location>
        <position position="65"/>
    </location>
</feature>
<reference key="1">
    <citation type="journal article" date="2008" name="Chem. Biol. Interact.">
        <title>Extending the Bacillus cereus group genomics to putative food-borne pathogens of different toxicity.</title>
        <authorList>
            <person name="Lapidus A."/>
            <person name="Goltsman E."/>
            <person name="Auger S."/>
            <person name="Galleron N."/>
            <person name="Segurens B."/>
            <person name="Dossat C."/>
            <person name="Land M.L."/>
            <person name="Broussolle V."/>
            <person name="Brillard J."/>
            <person name="Guinebretiere M.-H."/>
            <person name="Sanchis V."/>
            <person name="Nguen-the C."/>
            <person name="Lereclus D."/>
            <person name="Richardson P."/>
            <person name="Wincker P."/>
            <person name="Weissenbach J."/>
            <person name="Ehrlich S.D."/>
            <person name="Sorokin A."/>
        </authorList>
    </citation>
    <scope>NUCLEOTIDE SEQUENCE [LARGE SCALE GENOMIC DNA]</scope>
    <source>
        <strain>DSM 22905 / CIP 110041 / 391-98 / NVH 391-98</strain>
    </source>
</reference>
<name>UNG_BACCN</name>
<comment type="function">
    <text evidence="1">Excises uracil residues from the DNA which can arise as a result of misincorporation of dUMP residues by DNA polymerase or due to deamination of cytosine.</text>
</comment>
<comment type="catalytic activity">
    <reaction evidence="1">
        <text>Hydrolyzes single-stranded DNA or mismatched double-stranded DNA and polynucleotides, releasing free uracil.</text>
        <dbReference type="EC" id="3.2.2.27"/>
    </reaction>
</comment>
<comment type="subcellular location">
    <subcellularLocation>
        <location evidence="1">Cytoplasm</location>
    </subcellularLocation>
</comment>
<comment type="similarity">
    <text evidence="1">Belongs to the uracil-DNA glycosylase (UDG) superfamily. UNG family.</text>
</comment>
<sequence>MKKILKNDWEPILGPEFEKPYYQNLRQFLKEEYSMRVIYPNANDIFNALHYTSYEDTKVVILGQDPYHGPNQAHGLSFSVQPGVRVPPSLQNMYKELKADIGCEIPNHGYLVKWAEQGVLLLNTVLTVRQGEANSHKGKGWEQFTDRVIELLNEREKPVIFILWGRHAQAKKKRITNPNHYIIESVHPSPLSASRGFFGSKPFSKVNRFLSSIGEKEIDWQIPNL</sequence>
<gene>
    <name evidence="1" type="primary">ung</name>
    <name type="ordered locus">Bcer98_3919</name>
</gene>
<organism>
    <name type="scientific">Bacillus cytotoxicus (strain DSM 22905 / CIP 110041 / 391-98 / NVH 391-98)</name>
    <dbReference type="NCBI Taxonomy" id="315749"/>
    <lineage>
        <taxon>Bacteria</taxon>
        <taxon>Bacillati</taxon>
        <taxon>Bacillota</taxon>
        <taxon>Bacilli</taxon>
        <taxon>Bacillales</taxon>
        <taxon>Bacillaceae</taxon>
        <taxon>Bacillus</taxon>
        <taxon>Bacillus cereus group</taxon>
    </lineage>
</organism>
<evidence type="ECO:0000255" key="1">
    <source>
        <dbReference type="HAMAP-Rule" id="MF_00148"/>
    </source>
</evidence>
<protein>
    <recommendedName>
        <fullName evidence="1">Uracil-DNA glycosylase</fullName>
        <shortName evidence="1">UDG</shortName>
        <ecNumber evidence="1">3.2.2.27</ecNumber>
    </recommendedName>
</protein>
<accession>A7GVE5</accession>
<dbReference type="EC" id="3.2.2.27" evidence="1"/>
<dbReference type="EMBL" id="CP000764">
    <property type="protein sequence ID" value="ABS24103.1"/>
    <property type="molecule type" value="Genomic_DNA"/>
</dbReference>
<dbReference type="RefSeq" id="WP_012096362.1">
    <property type="nucleotide sequence ID" value="NC_009674.1"/>
</dbReference>
<dbReference type="SMR" id="A7GVE5"/>
<dbReference type="STRING" id="315749.Bcer98_3919"/>
<dbReference type="GeneID" id="33899151"/>
<dbReference type="KEGG" id="bcy:Bcer98_3919"/>
<dbReference type="eggNOG" id="COG0692">
    <property type="taxonomic scope" value="Bacteria"/>
</dbReference>
<dbReference type="HOGENOM" id="CLU_032162_3_0_9"/>
<dbReference type="OrthoDB" id="9804372at2"/>
<dbReference type="Proteomes" id="UP000002300">
    <property type="component" value="Chromosome"/>
</dbReference>
<dbReference type="GO" id="GO:0005737">
    <property type="term" value="C:cytoplasm"/>
    <property type="evidence" value="ECO:0007669"/>
    <property type="project" value="UniProtKB-SubCell"/>
</dbReference>
<dbReference type="GO" id="GO:0004844">
    <property type="term" value="F:uracil DNA N-glycosylase activity"/>
    <property type="evidence" value="ECO:0007669"/>
    <property type="project" value="UniProtKB-UniRule"/>
</dbReference>
<dbReference type="GO" id="GO:0097510">
    <property type="term" value="P:base-excision repair, AP site formation via deaminated base removal"/>
    <property type="evidence" value="ECO:0007669"/>
    <property type="project" value="TreeGrafter"/>
</dbReference>
<dbReference type="CDD" id="cd10027">
    <property type="entry name" value="UDG-F1-like"/>
    <property type="match status" value="1"/>
</dbReference>
<dbReference type="FunFam" id="3.40.470.10:FF:000001">
    <property type="entry name" value="Uracil-DNA glycosylase"/>
    <property type="match status" value="1"/>
</dbReference>
<dbReference type="Gene3D" id="3.40.470.10">
    <property type="entry name" value="Uracil-DNA glycosylase-like domain"/>
    <property type="match status" value="1"/>
</dbReference>
<dbReference type="HAMAP" id="MF_00148">
    <property type="entry name" value="UDG"/>
    <property type="match status" value="1"/>
</dbReference>
<dbReference type="InterPro" id="IPR002043">
    <property type="entry name" value="UDG_fam1"/>
</dbReference>
<dbReference type="InterPro" id="IPR018085">
    <property type="entry name" value="Ura-DNA_Glyclase_AS"/>
</dbReference>
<dbReference type="InterPro" id="IPR005122">
    <property type="entry name" value="Uracil-DNA_glycosylase-like"/>
</dbReference>
<dbReference type="InterPro" id="IPR036895">
    <property type="entry name" value="Uracil-DNA_glycosylase-like_sf"/>
</dbReference>
<dbReference type="NCBIfam" id="NF003588">
    <property type="entry name" value="PRK05254.1-1"/>
    <property type="match status" value="1"/>
</dbReference>
<dbReference type="NCBIfam" id="NF003589">
    <property type="entry name" value="PRK05254.1-2"/>
    <property type="match status" value="1"/>
</dbReference>
<dbReference type="NCBIfam" id="NF003591">
    <property type="entry name" value="PRK05254.1-4"/>
    <property type="match status" value="1"/>
</dbReference>
<dbReference type="NCBIfam" id="NF003592">
    <property type="entry name" value="PRK05254.1-5"/>
    <property type="match status" value="1"/>
</dbReference>
<dbReference type="NCBIfam" id="TIGR00628">
    <property type="entry name" value="ung"/>
    <property type="match status" value="1"/>
</dbReference>
<dbReference type="PANTHER" id="PTHR11264">
    <property type="entry name" value="URACIL-DNA GLYCOSYLASE"/>
    <property type="match status" value="1"/>
</dbReference>
<dbReference type="PANTHER" id="PTHR11264:SF0">
    <property type="entry name" value="URACIL-DNA GLYCOSYLASE"/>
    <property type="match status" value="1"/>
</dbReference>
<dbReference type="Pfam" id="PF03167">
    <property type="entry name" value="UDG"/>
    <property type="match status" value="1"/>
</dbReference>
<dbReference type="SMART" id="SM00986">
    <property type="entry name" value="UDG"/>
    <property type="match status" value="1"/>
</dbReference>
<dbReference type="SMART" id="SM00987">
    <property type="entry name" value="UreE_C"/>
    <property type="match status" value="1"/>
</dbReference>
<dbReference type="SUPFAM" id="SSF52141">
    <property type="entry name" value="Uracil-DNA glycosylase-like"/>
    <property type="match status" value="1"/>
</dbReference>
<dbReference type="PROSITE" id="PS00130">
    <property type="entry name" value="U_DNA_GLYCOSYLASE"/>
    <property type="match status" value="1"/>
</dbReference>
<keyword id="KW-0963">Cytoplasm</keyword>
<keyword id="KW-0227">DNA damage</keyword>
<keyword id="KW-0234">DNA repair</keyword>
<keyword id="KW-0378">Hydrolase</keyword>